<gene>
    <name evidence="1" type="primary">ctaB</name>
    <name type="ordered locus">Bind_0728</name>
</gene>
<comment type="function">
    <text evidence="1">Converts heme B (protoheme IX) to heme O by substitution of the vinyl group on carbon 2 of heme B porphyrin ring with a hydroxyethyl farnesyl side group.</text>
</comment>
<comment type="catalytic activity">
    <reaction evidence="1">
        <text>heme b + (2E,6E)-farnesyl diphosphate + H2O = Fe(II)-heme o + diphosphate</text>
        <dbReference type="Rhea" id="RHEA:28070"/>
        <dbReference type="ChEBI" id="CHEBI:15377"/>
        <dbReference type="ChEBI" id="CHEBI:33019"/>
        <dbReference type="ChEBI" id="CHEBI:60344"/>
        <dbReference type="ChEBI" id="CHEBI:60530"/>
        <dbReference type="ChEBI" id="CHEBI:175763"/>
        <dbReference type="EC" id="2.5.1.141"/>
    </reaction>
</comment>
<comment type="pathway">
    <text evidence="1">Porphyrin-containing compound metabolism; heme O biosynthesis; heme O from protoheme: step 1/1.</text>
</comment>
<comment type="subcellular location">
    <subcellularLocation>
        <location evidence="1">Cell inner membrane</location>
        <topology evidence="1">Multi-pass membrane protein</topology>
    </subcellularLocation>
</comment>
<comment type="miscellaneous">
    <text evidence="1">Carbon 2 of the heme B porphyrin ring is defined according to the Fischer nomenclature.</text>
</comment>
<comment type="similarity">
    <text evidence="1">Belongs to the UbiA prenyltransferase family. Protoheme IX farnesyltransferase subfamily.</text>
</comment>
<dbReference type="EC" id="2.5.1.141" evidence="1"/>
<dbReference type="EMBL" id="CP001016">
    <property type="protein sequence ID" value="ACB94378.1"/>
    <property type="molecule type" value="Genomic_DNA"/>
</dbReference>
<dbReference type="RefSeq" id="WP_012383735.1">
    <property type="nucleotide sequence ID" value="NC_010581.1"/>
</dbReference>
<dbReference type="SMR" id="B2IGJ6"/>
<dbReference type="STRING" id="395963.Bind_0728"/>
<dbReference type="KEGG" id="bid:Bind_0728"/>
<dbReference type="eggNOG" id="COG0109">
    <property type="taxonomic scope" value="Bacteria"/>
</dbReference>
<dbReference type="HOGENOM" id="CLU_029631_0_2_5"/>
<dbReference type="OrthoDB" id="9814417at2"/>
<dbReference type="UniPathway" id="UPA00834">
    <property type="reaction ID" value="UER00712"/>
</dbReference>
<dbReference type="Proteomes" id="UP000001695">
    <property type="component" value="Chromosome"/>
</dbReference>
<dbReference type="GO" id="GO:0005886">
    <property type="term" value="C:plasma membrane"/>
    <property type="evidence" value="ECO:0007669"/>
    <property type="project" value="UniProtKB-SubCell"/>
</dbReference>
<dbReference type="GO" id="GO:0008495">
    <property type="term" value="F:protoheme IX farnesyltransferase activity"/>
    <property type="evidence" value="ECO:0007669"/>
    <property type="project" value="UniProtKB-UniRule"/>
</dbReference>
<dbReference type="GO" id="GO:0048034">
    <property type="term" value="P:heme O biosynthetic process"/>
    <property type="evidence" value="ECO:0007669"/>
    <property type="project" value="UniProtKB-UniRule"/>
</dbReference>
<dbReference type="CDD" id="cd13957">
    <property type="entry name" value="PT_UbiA_Cox10"/>
    <property type="match status" value="1"/>
</dbReference>
<dbReference type="Gene3D" id="1.10.357.140">
    <property type="entry name" value="UbiA prenyltransferase"/>
    <property type="match status" value="1"/>
</dbReference>
<dbReference type="HAMAP" id="MF_00154">
    <property type="entry name" value="CyoE_CtaB"/>
    <property type="match status" value="1"/>
</dbReference>
<dbReference type="InterPro" id="IPR006369">
    <property type="entry name" value="Protohaem_IX_farnesylTrfase"/>
</dbReference>
<dbReference type="InterPro" id="IPR000537">
    <property type="entry name" value="UbiA_prenyltransferase"/>
</dbReference>
<dbReference type="InterPro" id="IPR030470">
    <property type="entry name" value="UbiA_prenylTrfase_CS"/>
</dbReference>
<dbReference type="InterPro" id="IPR044878">
    <property type="entry name" value="UbiA_sf"/>
</dbReference>
<dbReference type="NCBIfam" id="TIGR01473">
    <property type="entry name" value="cyoE_ctaB"/>
    <property type="match status" value="1"/>
</dbReference>
<dbReference type="NCBIfam" id="NF003349">
    <property type="entry name" value="PRK04375.1-2"/>
    <property type="match status" value="1"/>
</dbReference>
<dbReference type="PANTHER" id="PTHR43448:SF7">
    <property type="entry name" value="4-HYDROXYBENZOATE SOLANESYLTRANSFERASE"/>
    <property type="match status" value="1"/>
</dbReference>
<dbReference type="PANTHER" id="PTHR43448">
    <property type="entry name" value="PROTOHEME IX FARNESYLTRANSFERASE, MITOCHONDRIAL"/>
    <property type="match status" value="1"/>
</dbReference>
<dbReference type="Pfam" id="PF01040">
    <property type="entry name" value="UbiA"/>
    <property type="match status" value="1"/>
</dbReference>
<dbReference type="PROSITE" id="PS00943">
    <property type="entry name" value="UBIA"/>
    <property type="match status" value="1"/>
</dbReference>
<name>COXX_BEII9</name>
<keyword id="KW-0997">Cell inner membrane</keyword>
<keyword id="KW-1003">Cell membrane</keyword>
<keyword id="KW-0350">Heme biosynthesis</keyword>
<keyword id="KW-0472">Membrane</keyword>
<keyword id="KW-1185">Reference proteome</keyword>
<keyword id="KW-0808">Transferase</keyword>
<keyword id="KW-0812">Transmembrane</keyword>
<keyword id="KW-1133">Transmembrane helix</keyword>
<evidence type="ECO:0000255" key="1">
    <source>
        <dbReference type="HAMAP-Rule" id="MF_00154"/>
    </source>
</evidence>
<sequence length="321" mass="34588">MTFISQAPSVSISSAGPSDYFALLKPRVMSLVIFTALAGMLIAPDPVHPIVGFASLLAIAVGAGASGALNMWYDADIDAVMKRTAKRPIPLGRVMPNEALAFGLTLSFLSVFTLGIVANWLAAGFLAFTIFFYVVIYTMWLKRSTPQNIVIGGAAGAFPPMVGYAAATGHFSLSSFILFAIIFIWTPPHFWALALGRSEDYRQAGIPMMPNVKGAARTRLEILLYTLLLAPLGVAPWLLGFASFVYGMLSIALGAAMLFFAARVYIVQEGPSADRHAKALFGFSILYLFLLFAEIVVERLVPIVVAMGAWLTSGMFPGFFH</sequence>
<proteinExistence type="inferred from homology"/>
<protein>
    <recommendedName>
        <fullName evidence="1">Protoheme IX farnesyltransferase</fullName>
        <ecNumber evidence="1">2.5.1.141</ecNumber>
    </recommendedName>
    <alternativeName>
        <fullName evidence="1">Heme B farnesyltransferase</fullName>
    </alternativeName>
    <alternativeName>
        <fullName evidence="1">Heme O synthase</fullName>
    </alternativeName>
</protein>
<reference key="1">
    <citation type="journal article" date="2010" name="J. Bacteriol.">
        <title>Complete genome sequence of Beijerinckia indica subsp. indica.</title>
        <authorList>
            <person name="Tamas I."/>
            <person name="Dedysh S.N."/>
            <person name="Liesack W."/>
            <person name="Stott M.B."/>
            <person name="Alam M."/>
            <person name="Murrell J.C."/>
            <person name="Dunfield P.F."/>
        </authorList>
    </citation>
    <scope>NUCLEOTIDE SEQUENCE [LARGE SCALE GENOMIC DNA]</scope>
    <source>
        <strain>ATCC 9039 / DSM 1715 / NCIMB 8712</strain>
    </source>
</reference>
<accession>B2IGJ6</accession>
<organism>
    <name type="scientific">Beijerinckia indica subsp. indica (strain ATCC 9039 / DSM 1715 / NCIMB 8712)</name>
    <dbReference type="NCBI Taxonomy" id="395963"/>
    <lineage>
        <taxon>Bacteria</taxon>
        <taxon>Pseudomonadati</taxon>
        <taxon>Pseudomonadota</taxon>
        <taxon>Alphaproteobacteria</taxon>
        <taxon>Hyphomicrobiales</taxon>
        <taxon>Beijerinckiaceae</taxon>
        <taxon>Beijerinckia</taxon>
    </lineage>
</organism>
<feature type="chain" id="PRO_0000346029" description="Protoheme IX farnesyltransferase">
    <location>
        <begin position="1"/>
        <end position="321"/>
    </location>
</feature>
<feature type="transmembrane region" description="Helical" evidence="1">
    <location>
        <begin position="28"/>
        <end position="48"/>
    </location>
</feature>
<feature type="transmembrane region" description="Helical" evidence="1">
    <location>
        <begin position="49"/>
        <end position="69"/>
    </location>
</feature>
<feature type="transmembrane region" description="Helical" evidence="1">
    <location>
        <begin position="94"/>
        <end position="114"/>
    </location>
</feature>
<feature type="transmembrane region" description="Helical" evidence="1">
    <location>
        <begin position="116"/>
        <end position="136"/>
    </location>
</feature>
<feature type="transmembrane region" description="Helical" evidence="1">
    <location>
        <begin position="149"/>
        <end position="169"/>
    </location>
</feature>
<feature type="transmembrane region" description="Helical" evidence="1">
    <location>
        <begin position="176"/>
        <end position="196"/>
    </location>
</feature>
<feature type="transmembrane region" description="Helical" evidence="1">
    <location>
        <begin position="222"/>
        <end position="242"/>
    </location>
</feature>
<feature type="transmembrane region" description="Helical" evidence="1">
    <location>
        <begin position="247"/>
        <end position="267"/>
    </location>
</feature>
<feature type="transmembrane region" description="Helical" evidence="1">
    <location>
        <begin position="277"/>
        <end position="297"/>
    </location>
</feature>
<feature type="transmembrane region" description="Helical" evidence="1">
    <location>
        <begin position="300"/>
        <end position="320"/>
    </location>
</feature>